<sequence>MPILSKYSNEQVEQIVDQLIDVLTQHNAPVDLSLMCLGNSITHILKEHVPTGKRQAVTENFAKALAQSVK</sequence>
<proteinExistence type="inferred from homology"/>
<organism>
    <name type="scientific">Pseudoalteromonas translucida (strain TAC 125)</name>
    <dbReference type="NCBI Taxonomy" id="326442"/>
    <lineage>
        <taxon>Bacteria</taxon>
        <taxon>Pseudomonadati</taxon>
        <taxon>Pseudomonadota</taxon>
        <taxon>Gammaproteobacteria</taxon>
        <taxon>Alteromonadales</taxon>
        <taxon>Pseudoalteromonadaceae</taxon>
        <taxon>Pseudoalteromonas</taxon>
    </lineage>
</organism>
<feature type="chain" id="PRO_1000062311" description="UPF0352 protein PSHAa1818">
    <location>
        <begin position="1"/>
        <end position="70"/>
    </location>
</feature>
<accession>Q3IHD0</accession>
<gene>
    <name type="ordered locus">PSHAa1818</name>
</gene>
<reference key="1">
    <citation type="journal article" date="2005" name="Genome Res.">
        <title>Coping with cold: the genome of the versatile marine Antarctica bacterium Pseudoalteromonas haloplanktis TAC125.</title>
        <authorList>
            <person name="Medigue C."/>
            <person name="Krin E."/>
            <person name="Pascal G."/>
            <person name="Barbe V."/>
            <person name="Bernsel A."/>
            <person name="Bertin P.N."/>
            <person name="Cheung F."/>
            <person name="Cruveiller S."/>
            <person name="D'Amico S."/>
            <person name="Duilio A."/>
            <person name="Fang G."/>
            <person name="Feller G."/>
            <person name="Ho C."/>
            <person name="Mangenot S."/>
            <person name="Marino G."/>
            <person name="Nilsson J."/>
            <person name="Parrilli E."/>
            <person name="Rocha E.P.C."/>
            <person name="Rouy Z."/>
            <person name="Sekowska A."/>
            <person name="Tutino M.L."/>
            <person name="Vallenet D."/>
            <person name="von Heijne G."/>
            <person name="Danchin A."/>
        </authorList>
    </citation>
    <scope>NUCLEOTIDE SEQUENCE [LARGE SCALE GENOMIC DNA]</scope>
    <source>
        <strain>TAC 125</strain>
    </source>
</reference>
<evidence type="ECO:0000255" key="1">
    <source>
        <dbReference type="HAMAP-Rule" id="MF_00816"/>
    </source>
</evidence>
<dbReference type="EMBL" id="CR954246">
    <property type="protein sequence ID" value="CAI86890.1"/>
    <property type="molecule type" value="Genomic_DNA"/>
</dbReference>
<dbReference type="SMR" id="Q3IHD0"/>
<dbReference type="STRING" id="326442.PSHAa1818"/>
<dbReference type="KEGG" id="pha:PSHAa1818"/>
<dbReference type="eggNOG" id="COG3082">
    <property type="taxonomic scope" value="Bacteria"/>
</dbReference>
<dbReference type="HOGENOM" id="CLU_175457_0_0_6"/>
<dbReference type="BioCyc" id="PHAL326442:PSHA_RS08915-MONOMER"/>
<dbReference type="Proteomes" id="UP000006843">
    <property type="component" value="Chromosome I"/>
</dbReference>
<dbReference type="Gene3D" id="1.10.3390.10">
    <property type="entry name" value="YejL-like"/>
    <property type="match status" value="1"/>
</dbReference>
<dbReference type="HAMAP" id="MF_00816">
    <property type="entry name" value="UPF0352"/>
    <property type="match status" value="1"/>
</dbReference>
<dbReference type="InterPro" id="IPR009857">
    <property type="entry name" value="UPF0352"/>
</dbReference>
<dbReference type="InterPro" id="IPR023202">
    <property type="entry name" value="YejL_sf"/>
</dbReference>
<dbReference type="NCBIfam" id="NF010242">
    <property type="entry name" value="PRK13689.1"/>
    <property type="match status" value="1"/>
</dbReference>
<dbReference type="Pfam" id="PF07208">
    <property type="entry name" value="DUF1414"/>
    <property type="match status" value="1"/>
</dbReference>
<dbReference type="PIRSF" id="PIRSF006188">
    <property type="entry name" value="UCP006188"/>
    <property type="match status" value="1"/>
</dbReference>
<dbReference type="SUPFAM" id="SSF158651">
    <property type="entry name" value="YejL-like"/>
    <property type="match status" value="1"/>
</dbReference>
<protein>
    <recommendedName>
        <fullName evidence="1">UPF0352 protein PSHAa1818</fullName>
    </recommendedName>
</protein>
<name>Y1818_PSET1</name>
<comment type="similarity">
    <text evidence="1">Belongs to the UPF0352 family.</text>
</comment>
<keyword id="KW-1185">Reference proteome</keyword>